<dbReference type="EMBL" id="AI227900">
    <property type="status" value="NOT_ANNOTATED_CDS"/>
    <property type="molecule type" value="mRNA"/>
</dbReference>
<dbReference type="RefSeq" id="NP_001100964.1">
    <property type="nucleotide sequence ID" value="NM_001107494.1"/>
</dbReference>
<dbReference type="RefSeq" id="XP_006228500.1">
    <property type="nucleotide sequence ID" value="XM_006228438.5"/>
</dbReference>
<dbReference type="FunCoup" id="P0C5J3">
    <property type="interactions" value="178"/>
</dbReference>
<dbReference type="STRING" id="10116.ENSRNOP00000028029"/>
<dbReference type="PaxDb" id="10116-ENSRNOP00000028029"/>
<dbReference type="Ensembl" id="ENSRNOT00000028029.7">
    <property type="protein sequence ID" value="ENSRNOP00000028029.5"/>
    <property type="gene ID" value="ENSRNOG00000028753.7"/>
</dbReference>
<dbReference type="GeneID" id="308443"/>
<dbReference type="KEGG" id="rno:308443"/>
<dbReference type="UCSC" id="RGD:1566122">
    <property type="organism name" value="rat"/>
</dbReference>
<dbReference type="AGR" id="RGD:1566122"/>
<dbReference type="CTD" id="80776"/>
<dbReference type="RGD" id="1566122">
    <property type="gene designation" value="B9d2"/>
</dbReference>
<dbReference type="eggNOG" id="KOG4028">
    <property type="taxonomic scope" value="Eukaryota"/>
</dbReference>
<dbReference type="GeneTree" id="ENSGT00940000161428"/>
<dbReference type="HOGENOM" id="CLU_084934_2_1_1"/>
<dbReference type="InParanoid" id="P0C5J3"/>
<dbReference type="OMA" id="DVAYWCH"/>
<dbReference type="OrthoDB" id="184109at2759"/>
<dbReference type="PhylomeDB" id="P0C5J3"/>
<dbReference type="Reactome" id="R-RNO-141444">
    <property type="pathway name" value="Amplification of signal from unattached kinetochores via a MAD2 inhibitory signal"/>
</dbReference>
<dbReference type="Reactome" id="R-RNO-2467813">
    <property type="pathway name" value="Separation of Sister Chromatids"/>
</dbReference>
<dbReference type="Reactome" id="R-RNO-2500257">
    <property type="pathway name" value="Resolution of Sister Chromatid Cohesion"/>
</dbReference>
<dbReference type="Reactome" id="R-RNO-5620912">
    <property type="pathway name" value="Anchoring of the basal body to the plasma membrane"/>
</dbReference>
<dbReference type="Reactome" id="R-RNO-5663220">
    <property type="pathway name" value="RHO GTPases Activate Formins"/>
</dbReference>
<dbReference type="Reactome" id="R-RNO-68877">
    <property type="pathway name" value="Mitotic Prometaphase"/>
</dbReference>
<dbReference type="Reactome" id="R-RNO-9648025">
    <property type="pathway name" value="EML4 and NUDC in mitotic spindle formation"/>
</dbReference>
<dbReference type="PRO" id="PR:P0C5J3"/>
<dbReference type="Proteomes" id="UP000002494">
    <property type="component" value="Chromosome 1"/>
</dbReference>
<dbReference type="Bgee" id="ENSRNOG00000028753">
    <property type="expression patterns" value="Expressed in frontal cortex and 19 other cell types or tissues"/>
</dbReference>
<dbReference type="GO" id="GO:0005813">
    <property type="term" value="C:centrosome"/>
    <property type="evidence" value="ECO:0000250"/>
    <property type="project" value="UniProtKB"/>
</dbReference>
<dbReference type="GO" id="GO:0036064">
    <property type="term" value="C:ciliary basal body"/>
    <property type="evidence" value="ECO:0000250"/>
    <property type="project" value="UniProtKB"/>
</dbReference>
<dbReference type="GO" id="GO:0035869">
    <property type="term" value="C:ciliary transition zone"/>
    <property type="evidence" value="ECO:0000266"/>
    <property type="project" value="RGD"/>
</dbReference>
<dbReference type="GO" id="GO:0005737">
    <property type="term" value="C:cytoplasm"/>
    <property type="evidence" value="ECO:0007669"/>
    <property type="project" value="UniProtKB-KW"/>
</dbReference>
<dbReference type="GO" id="GO:0016020">
    <property type="term" value="C:membrane"/>
    <property type="evidence" value="ECO:0000266"/>
    <property type="project" value="RGD"/>
</dbReference>
<dbReference type="GO" id="GO:0036038">
    <property type="term" value="C:MKS complex"/>
    <property type="evidence" value="ECO:0000250"/>
    <property type="project" value="UniProtKB"/>
</dbReference>
<dbReference type="GO" id="GO:0005634">
    <property type="term" value="C:nucleus"/>
    <property type="evidence" value="ECO:0007669"/>
    <property type="project" value="UniProtKB-SubCell"/>
</dbReference>
<dbReference type="GO" id="GO:0043015">
    <property type="term" value="F:gamma-tubulin binding"/>
    <property type="evidence" value="ECO:0000250"/>
    <property type="project" value="UniProtKB"/>
</dbReference>
<dbReference type="GO" id="GO:0060271">
    <property type="term" value="P:cilium assembly"/>
    <property type="evidence" value="ECO:0000250"/>
    <property type="project" value="UniProtKB"/>
</dbReference>
<dbReference type="InterPro" id="IPR010796">
    <property type="entry name" value="C2_B9-type_dom"/>
</dbReference>
<dbReference type="PANTHER" id="PTHR12968">
    <property type="entry name" value="B9 DOMAIN-CONTAINING"/>
    <property type="match status" value="1"/>
</dbReference>
<dbReference type="PANTHER" id="PTHR12968:SF2">
    <property type="entry name" value="B9 DOMAIN-CONTAINING PROTEIN 2"/>
    <property type="match status" value="1"/>
</dbReference>
<dbReference type="Pfam" id="PF07162">
    <property type="entry name" value="B9-C2"/>
    <property type="match status" value="1"/>
</dbReference>
<dbReference type="PROSITE" id="PS51381">
    <property type="entry name" value="C2_B9"/>
    <property type="match status" value="1"/>
</dbReference>
<keyword id="KW-0966">Cell projection</keyword>
<keyword id="KW-0969">Cilium</keyword>
<keyword id="KW-0970">Cilium biogenesis/degradation</keyword>
<keyword id="KW-0963">Cytoplasm</keyword>
<keyword id="KW-0206">Cytoskeleton</keyword>
<keyword id="KW-0539">Nucleus</keyword>
<keyword id="KW-1185">Reference proteome</keyword>
<evidence type="ECO:0000250" key="1"/>
<evidence type="ECO:0000255" key="2">
    <source>
        <dbReference type="PROSITE-ProRule" id="PRU00713"/>
    </source>
</evidence>
<evidence type="ECO:0000305" key="3"/>
<organism>
    <name type="scientific">Rattus norvegicus</name>
    <name type="common">Rat</name>
    <dbReference type="NCBI Taxonomy" id="10116"/>
    <lineage>
        <taxon>Eukaryota</taxon>
        <taxon>Metazoa</taxon>
        <taxon>Chordata</taxon>
        <taxon>Craniata</taxon>
        <taxon>Vertebrata</taxon>
        <taxon>Euteleostomi</taxon>
        <taxon>Mammalia</taxon>
        <taxon>Eutheria</taxon>
        <taxon>Euarchontoglires</taxon>
        <taxon>Glires</taxon>
        <taxon>Rodentia</taxon>
        <taxon>Myomorpha</taxon>
        <taxon>Muroidea</taxon>
        <taxon>Muridae</taxon>
        <taxon>Murinae</taxon>
        <taxon>Rattus</taxon>
    </lineage>
</organism>
<sequence>MAEVHVIGQIIGATGFSEGSLFCKWGIHTGAAWKLLSGVREGQTQVDTPQTGDMAYWSHPIDLHFATKGLQGWPRLHLQVWSQDSFGRCQLAGYGFCHVPSSPGTHQLDCPTWRPLGSWREQLARAFVGGGPQLLHADTIYSGADRYRLHTAAGGTVHLGIGLLLRHFDRYGVEC</sequence>
<proteinExistence type="evidence at transcript level"/>
<gene>
    <name type="primary">B9d2</name>
</gene>
<feature type="chain" id="PRO_0000307676" description="B9 domain-containing protein 2">
    <location>
        <begin position="1"/>
        <end position="175"/>
    </location>
</feature>
<feature type="domain" description="C2 B9-type" evidence="2">
    <location>
        <begin position="2"/>
        <end position="118"/>
    </location>
</feature>
<protein>
    <recommendedName>
        <fullName>B9 domain-containing protein 2</fullName>
    </recommendedName>
</protein>
<accession>P0C5J3</accession>
<reference key="1">
    <citation type="submission" date="1999-01" db="EMBL/GenBank/DDBJ databases">
        <title>Rat genome project: generation of a rat EST (REST) catalog &amp; rat gene index.</title>
        <authorList>
            <person name="Lee N.H."/>
            <person name="Glodek A."/>
            <person name="Chandra I."/>
            <person name="Mason T.M."/>
            <person name="Quackenbush J."/>
            <person name="Kerlavage A.R."/>
            <person name="Adams M.D."/>
        </authorList>
    </citation>
    <scope>NUCLEOTIDE SEQUENCE [LARGE SCALE MRNA]</scope>
    <source>
        <tissue>Brain</tissue>
    </source>
</reference>
<name>B9D2_RAT</name>
<comment type="function">
    <text evidence="1">Component of the tectonic-like complex, a complex localized at the transition zone of primary cilia and acting as a barrier that prevents diffusion of transmembrane proteins between the cilia and plasma membranes.</text>
</comment>
<comment type="subunit">
    <text evidence="1">Part of the tectonic-like complex (also named B9 complex). Interacts with TUBG1 (By similarity).</text>
</comment>
<comment type="subcellular location">
    <subcellularLocation>
        <location evidence="1">Cytoplasm</location>
        <location evidence="1">Cytoskeleton</location>
        <location evidence="1">Cilium basal body</location>
    </subcellularLocation>
    <subcellularLocation>
        <location evidence="1">Cytoplasm</location>
        <location evidence="1">Cytoskeleton</location>
        <location evidence="1">Cilium axoneme</location>
    </subcellularLocation>
    <subcellularLocation>
        <location evidence="1">Nucleus</location>
    </subcellularLocation>
</comment>
<comment type="similarity">
    <text evidence="3">Belongs to the B9D family.</text>
</comment>